<reference key="1">
    <citation type="journal article" date="2002" name="Nature">
        <title>The genome sequence of Schizosaccharomyces pombe.</title>
        <authorList>
            <person name="Wood V."/>
            <person name="Gwilliam R."/>
            <person name="Rajandream M.A."/>
            <person name="Lyne M.H."/>
            <person name="Lyne R."/>
            <person name="Stewart A."/>
            <person name="Sgouros J.G."/>
            <person name="Peat N."/>
            <person name="Hayles J."/>
            <person name="Baker S.G."/>
            <person name="Basham D."/>
            <person name="Bowman S."/>
            <person name="Brooks K."/>
            <person name="Brown D."/>
            <person name="Brown S."/>
            <person name="Chillingworth T."/>
            <person name="Churcher C.M."/>
            <person name="Collins M."/>
            <person name="Connor R."/>
            <person name="Cronin A."/>
            <person name="Davis P."/>
            <person name="Feltwell T."/>
            <person name="Fraser A."/>
            <person name="Gentles S."/>
            <person name="Goble A."/>
            <person name="Hamlin N."/>
            <person name="Harris D.E."/>
            <person name="Hidalgo J."/>
            <person name="Hodgson G."/>
            <person name="Holroyd S."/>
            <person name="Hornsby T."/>
            <person name="Howarth S."/>
            <person name="Huckle E.J."/>
            <person name="Hunt S."/>
            <person name="Jagels K."/>
            <person name="James K.D."/>
            <person name="Jones L."/>
            <person name="Jones M."/>
            <person name="Leather S."/>
            <person name="McDonald S."/>
            <person name="McLean J."/>
            <person name="Mooney P."/>
            <person name="Moule S."/>
            <person name="Mungall K.L."/>
            <person name="Murphy L.D."/>
            <person name="Niblett D."/>
            <person name="Odell C."/>
            <person name="Oliver K."/>
            <person name="O'Neil S."/>
            <person name="Pearson D."/>
            <person name="Quail M.A."/>
            <person name="Rabbinowitsch E."/>
            <person name="Rutherford K.M."/>
            <person name="Rutter S."/>
            <person name="Saunders D."/>
            <person name="Seeger K."/>
            <person name="Sharp S."/>
            <person name="Skelton J."/>
            <person name="Simmonds M.N."/>
            <person name="Squares R."/>
            <person name="Squares S."/>
            <person name="Stevens K."/>
            <person name="Taylor K."/>
            <person name="Taylor R.G."/>
            <person name="Tivey A."/>
            <person name="Walsh S.V."/>
            <person name="Warren T."/>
            <person name="Whitehead S."/>
            <person name="Woodward J.R."/>
            <person name="Volckaert G."/>
            <person name="Aert R."/>
            <person name="Robben J."/>
            <person name="Grymonprez B."/>
            <person name="Weltjens I."/>
            <person name="Vanstreels E."/>
            <person name="Rieger M."/>
            <person name="Schaefer M."/>
            <person name="Mueller-Auer S."/>
            <person name="Gabel C."/>
            <person name="Fuchs M."/>
            <person name="Duesterhoeft A."/>
            <person name="Fritzc C."/>
            <person name="Holzer E."/>
            <person name="Moestl D."/>
            <person name="Hilbert H."/>
            <person name="Borzym K."/>
            <person name="Langer I."/>
            <person name="Beck A."/>
            <person name="Lehrach H."/>
            <person name="Reinhardt R."/>
            <person name="Pohl T.M."/>
            <person name="Eger P."/>
            <person name="Zimmermann W."/>
            <person name="Wedler H."/>
            <person name="Wambutt R."/>
            <person name="Purnelle B."/>
            <person name="Goffeau A."/>
            <person name="Cadieu E."/>
            <person name="Dreano S."/>
            <person name="Gloux S."/>
            <person name="Lelaure V."/>
            <person name="Mottier S."/>
            <person name="Galibert F."/>
            <person name="Aves S.J."/>
            <person name="Xiang Z."/>
            <person name="Hunt C."/>
            <person name="Moore K."/>
            <person name="Hurst S.M."/>
            <person name="Lucas M."/>
            <person name="Rochet M."/>
            <person name="Gaillardin C."/>
            <person name="Tallada V.A."/>
            <person name="Garzon A."/>
            <person name="Thode G."/>
            <person name="Daga R.R."/>
            <person name="Cruzado L."/>
            <person name="Jimenez J."/>
            <person name="Sanchez M."/>
            <person name="del Rey F."/>
            <person name="Benito J."/>
            <person name="Dominguez A."/>
            <person name="Revuelta J.L."/>
            <person name="Moreno S."/>
            <person name="Armstrong J."/>
            <person name="Forsburg S.L."/>
            <person name="Cerutti L."/>
            <person name="Lowe T."/>
            <person name="McCombie W.R."/>
            <person name="Paulsen I."/>
            <person name="Potashkin J."/>
            <person name="Shpakovski G.V."/>
            <person name="Ussery D."/>
            <person name="Barrell B.G."/>
            <person name="Nurse P."/>
        </authorList>
    </citation>
    <scope>NUCLEOTIDE SEQUENCE [LARGE SCALE GENOMIC DNA]</scope>
    <source>
        <strain>972 / ATCC 24843</strain>
    </source>
</reference>
<reference key="2">
    <citation type="journal article" date="2006" name="Nat. Biotechnol.">
        <title>ORFeome cloning and global analysis of protein localization in the fission yeast Schizosaccharomyces pombe.</title>
        <authorList>
            <person name="Matsuyama A."/>
            <person name="Arai R."/>
            <person name="Yashiroda Y."/>
            <person name="Shirai A."/>
            <person name="Kamata A."/>
            <person name="Sekido S."/>
            <person name="Kobayashi Y."/>
            <person name="Hashimoto A."/>
            <person name="Hamamoto M."/>
            <person name="Hiraoka Y."/>
            <person name="Horinouchi S."/>
            <person name="Yoshida M."/>
        </authorList>
    </citation>
    <scope>SUBCELLULAR LOCATION [LARGE SCALE ANALYSIS]</scope>
</reference>
<reference key="3">
    <citation type="journal article" date="2008" name="J. Proteome Res.">
        <title>Phosphoproteome analysis of fission yeast.</title>
        <authorList>
            <person name="Wilson-Grady J.T."/>
            <person name="Villen J."/>
            <person name="Gygi S.P."/>
        </authorList>
    </citation>
    <scope>PHOSPHORYLATION [LARGE SCALE ANALYSIS] AT THR-55; SER-57 AND SER-76</scope>
    <scope>IDENTIFICATION BY MASS SPECTROMETRY</scope>
</reference>
<gene>
    <name type="primary">zuo1</name>
    <name type="ORF">SPBC1778.01c</name>
    <name type="ORF">SPBC30D10.01</name>
</gene>
<keyword id="KW-0143">Chaperone</keyword>
<keyword id="KW-0963">Cytoplasm</keyword>
<keyword id="KW-0238">DNA-binding</keyword>
<keyword id="KW-0597">Phosphoprotein</keyword>
<keyword id="KW-1185">Reference proteome</keyword>
<feature type="chain" id="PRO_0000071159" description="Zuotin">
    <location>
        <begin position="1"/>
        <end position="442"/>
    </location>
</feature>
<feature type="domain" description="J" evidence="2">
    <location>
        <begin position="97"/>
        <end position="167"/>
    </location>
</feature>
<feature type="region of interest" description="Disordered" evidence="3">
    <location>
        <begin position="49"/>
        <end position="84"/>
    </location>
</feature>
<feature type="region of interest" description="Disordered" evidence="3">
    <location>
        <begin position="242"/>
        <end position="270"/>
    </location>
</feature>
<feature type="region of interest" description="Disordered" evidence="3">
    <location>
        <begin position="306"/>
        <end position="331"/>
    </location>
</feature>
<feature type="compositionally biased region" description="Basic and acidic residues" evidence="3">
    <location>
        <begin position="55"/>
        <end position="71"/>
    </location>
</feature>
<feature type="compositionally biased region" description="Acidic residues" evidence="3">
    <location>
        <begin position="72"/>
        <end position="83"/>
    </location>
</feature>
<feature type="compositionally biased region" description="Basic and acidic residues" evidence="3">
    <location>
        <begin position="316"/>
        <end position="330"/>
    </location>
</feature>
<feature type="modified residue" description="Phosphothreonine" evidence="5">
    <location>
        <position position="55"/>
    </location>
</feature>
<feature type="modified residue" description="Phosphoserine" evidence="5">
    <location>
        <position position="57"/>
    </location>
</feature>
<feature type="modified residue" description="Phosphoserine" evidence="5">
    <location>
        <position position="76"/>
    </location>
</feature>
<accession>Q9Y7I8</accession>
<accession>O14347</accession>
<organism>
    <name type="scientific">Schizosaccharomyces pombe (strain 972 / ATCC 24843)</name>
    <name type="common">Fission yeast</name>
    <dbReference type="NCBI Taxonomy" id="284812"/>
    <lineage>
        <taxon>Eukaryota</taxon>
        <taxon>Fungi</taxon>
        <taxon>Dikarya</taxon>
        <taxon>Ascomycota</taxon>
        <taxon>Taphrinomycotina</taxon>
        <taxon>Schizosaccharomycetes</taxon>
        <taxon>Schizosaccharomycetales</taxon>
        <taxon>Schizosaccharomycetaceae</taxon>
        <taxon>Schizosaccharomyces</taxon>
    </lineage>
</organism>
<comment type="function">
    <text evidence="1">Component of the ribosome-associated complex (RAC), a heterodimeric chaperone complex involved in regulation of accurate translation termination and in folding or maintaining nascent polypeptides in a folding-competent state. RAC stimulates the ATPase activity of the ribosome-associated pool of Hsp70-type chaperones SSB1/SSB2 that bind to the nascent polypeptide chain (By similarity).</text>
</comment>
<comment type="subunit">
    <text evidence="1">RAC is a heterodimer of the Hsp70/DnaK-type chaperone ssz1 and the Hsp40/DnaJ-type chaperone zuo1. RAC associates with ribosomes via zuo1 (By similarity).</text>
</comment>
<comment type="subcellular location">
    <subcellularLocation>
        <location evidence="4">Cytoplasm</location>
    </subcellularLocation>
</comment>
<name>ZUO1_SCHPO</name>
<protein>
    <recommendedName>
        <fullName>Zuotin</fullName>
    </recommendedName>
    <alternativeName>
        <fullName>DnaJ-related protein zuo1</fullName>
        <shortName>J protein zuo1</shortName>
    </alternativeName>
    <alternativeName>
        <fullName>Ribosome-associated complex subunit zuo1</fullName>
    </alternativeName>
</protein>
<proteinExistence type="evidence at protein level"/>
<sequence>MSAGDSIQLFPPTTKQAIEASFVPHGKISPLIKRAVEPVGPLFLAHARRQRHGRTFSEDERLEVKNKVQEEVKEESEDEEEDPAMLRADPKEWKQQDHYAVLGLSKYRYKADTEQIKKAHLKKVLKHHPDKKAASGNINDDSFFKCIQKAYEILSDPVRRRQFDSVDENADVEPPESTTKETFFELWTPVFESEARFSKKQPVPSLGTIESTRAEVDNFYNFWYNFDSWRSFEYLDKDIPDDGESRDNKRFQEKKNRSERQKNKARDNARLRNLVDTALASDPRIKLFKEQEKAAKAARKWEREAGAREAAAAAQKKKEEEERRAAEEAAAKASAAAANKKAKEDKKKAQKRDKKVVKNALKDFNYFSATDVPSAEHVDSVLKDVDVIMSKLGEGELGQLAADINAEKAAGAASVQAVFDKFAKMFIERGSMSSADVVFFAQ</sequence>
<evidence type="ECO:0000250" key="1"/>
<evidence type="ECO:0000255" key="2">
    <source>
        <dbReference type="PROSITE-ProRule" id="PRU00286"/>
    </source>
</evidence>
<evidence type="ECO:0000256" key="3">
    <source>
        <dbReference type="SAM" id="MobiDB-lite"/>
    </source>
</evidence>
<evidence type="ECO:0000269" key="4">
    <source>
    </source>
</evidence>
<evidence type="ECO:0000269" key="5">
    <source>
    </source>
</evidence>
<dbReference type="EMBL" id="CU329671">
    <property type="protein sequence ID" value="CAB10796.2"/>
    <property type="molecule type" value="Genomic_DNA"/>
</dbReference>
<dbReference type="PIR" id="T39683">
    <property type="entry name" value="T39683"/>
</dbReference>
<dbReference type="RefSeq" id="NP_596284.2">
    <property type="nucleotide sequence ID" value="NM_001022205.3"/>
</dbReference>
<dbReference type="SMR" id="Q9Y7I8"/>
<dbReference type="BioGRID" id="276351">
    <property type="interactions" value="3"/>
</dbReference>
<dbReference type="FunCoup" id="Q9Y7I8">
    <property type="interactions" value="402"/>
</dbReference>
<dbReference type="STRING" id="284812.Q9Y7I8"/>
<dbReference type="iPTMnet" id="Q9Y7I8"/>
<dbReference type="PaxDb" id="4896-SPBC1778.01c.1"/>
<dbReference type="EnsemblFungi" id="SPBC1778.01c.1">
    <property type="protein sequence ID" value="SPBC1778.01c.1:pep"/>
    <property type="gene ID" value="SPBC1778.01c"/>
</dbReference>
<dbReference type="GeneID" id="2539801"/>
<dbReference type="KEGG" id="spo:2539801"/>
<dbReference type="PomBase" id="SPBC1778.01c">
    <property type="gene designation" value="zuo1"/>
</dbReference>
<dbReference type="VEuPathDB" id="FungiDB:SPBC1778.01c"/>
<dbReference type="eggNOG" id="KOG0724">
    <property type="taxonomic scope" value="Eukaryota"/>
</dbReference>
<dbReference type="HOGENOM" id="CLU_019916_1_0_1"/>
<dbReference type="InParanoid" id="Q9Y7I8"/>
<dbReference type="OMA" id="ELEDXEL"/>
<dbReference type="PhylomeDB" id="Q9Y7I8"/>
<dbReference type="Reactome" id="R-SPO-3371453">
    <property type="pathway name" value="Regulation of HSF1-mediated heat shock response"/>
</dbReference>
<dbReference type="PRO" id="PR:Q9Y7I8"/>
<dbReference type="Proteomes" id="UP000002485">
    <property type="component" value="Chromosome II"/>
</dbReference>
<dbReference type="GO" id="GO:0005829">
    <property type="term" value="C:cytosol"/>
    <property type="evidence" value="ECO:0007005"/>
    <property type="project" value="PomBase"/>
</dbReference>
<dbReference type="GO" id="GO:0003677">
    <property type="term" value="F:DNA binding"/>
    <property type="evidence" value="ECO:0007669"/>
    <property type="project" value="UniProtKB-KW"/>
</dbReference>
<dbReference type="GO" id="GO:0030544">
    <property type="term" value="F:Hsp70 protein binding"/>
    <property type="evidence" value="ECO:0000318"/>
    <property type="project" value="GO_Central"/>
</dbReference>
<dbReference type="GO" id="GO:0043022">
    <property type="term" value="F:ribosome binding"/>
    <property type="evidence" value="ECO:0000318"/>
    <property type="project" value="GO_Central"/>
</dbReference>
<dbReference type="GO" id="GO:0051082">
    <property type="term" value="F:unfolded protein binding"/>
    <property type="evidence" value="ECO:0000266"/>
    <property type="project" value="PomBase"/>
</dbReference>
<dbReference type="GO" id="GO:0051083">
    <property type="term" value="P:'de novo' cotranslational protein folding"/>
    <property type="evidence" value="ECO:0000318"/>
    <property type="project" value="GO_Central"/>
</dbReference>
<dbReference type="GO" id="GO:0002182">
    <property type="term" value="P:cytoplasmic translational elongation"/>
    <property type="evidence" value="ECO:0000303"/>
    <property type="project" value="PomBase"/>
</dbReference>
<dbReference type="GO" id="GO:0006450">
    <property type="term" value="P:regulation of translational fidelity"/>
    <property type="evidence" value="ECO:0007669"/>
    <property type="project" value="InterPro"/>
</dbReference>
<dbReference type="CDD" id="cd06257">
    <property type="entry name" value="DnaJ"/>
    <property type="match status" value="1"/>
</dbReference>
<dbReference type="CDD" id="cd23953">
    <property type="entry name" value="zuotin_NTD"/>
    <property type="match status" value="1"/>
</dbReference>
<dbReference type="Gene3D" id="1.10.287.110">
    <property type="entry name" value="DnaJ domain"/>
    <property type="match status" value="1"/>
</dbReference>
<dbReference type="Gene3D" id="1.10.8.840">
    <property type="entry name" value="Ribosome-associated complex head domain"/>
    <property type="match status" value="1"/>
</dbReference>
<dbReference type="InterPro" id="IPR001623">
    <property type="entry name" value="DnaJ_domain"/>
</dbReference>
<dbReference type="InterPro" id="IPR018253">
    <property type="entry name" value="DnaJ_domain_CS"/>
</dbReference>
<dbReference type="InterPro" id="IPR036869">
    <property type="entry name" value="J_dom_sf"/>
</dbReference>
<dbReference type="InterPro" id="IPR032003">
    <property type="entry name" value="RAC_head"/>
</dbReference>
<dbReference type="InterPro" id="IPR042569">
    <property type="entry name" value="RAC_head_sf"/>
</dbReference>
<dbReference type="InterPro" id="IPR054076">
    <property type="entry name" value="ZUO1-like_ZHD"/>
</dbReference>
<dbReference type="InterPro" id="IPR044634">
    <property type="entry name" value="Zuotin/DnaJC2"/>
</dbReference>
<dbReference type="PANTHER" id="PTHR43999">
    <property type="entry name" value="DNAJ HOMOLOG SUBFAMILY C MEMBER 2"/>
    <property type="match status" value="1"/>
</dbReference>
<dbReference type="PANTHER" id="PTHR43999:SF1">
    <property type="entry name" value="DNAJ HOMOLOG SUBFAMILY C MEMBER 2"/>
    <property type="match status" value="1"/>
</dbReference>
<dbReference type="Pfam" id="PF00226">
    <property type="entry name" value="DnaJ"/>
    <property type="match status" value="1"/>
</dbReference>
<dbReference type="Pfam" id="PF16717">
    <property type="entry name" value="RAC_head"/>
    <property type="match status" value="1"/>
</dbReference>
<dbReference type="Pfam" id="PF21884">
    <property type="entry name" value="ZUO1-like_ZHD"/>
    <property type="match status" value="1"/>
</dbReference>
<dbReference type="PRINTS" id="PR00625">
    <property type="entry name" value="JDOMAIN"/>
</dbReference>
<dbReference type="SMART" id="SM00271">
    <property type="entry name" value="DnaJ"/>
    <property type="match status" value="1"/>
</dbReference>
<dbReference type="SUPFAM" id="SSF46565">
    <property type="entry name" value="Chaperone J-domain"/>
    <property type="match status" value="1"/>
</dbReference>
<dbReference type="PROSITE" id="PS00636">
    <property type="entry name" value="DNAJ_1"/>
    <property type="match status" value="1"/>
</dbReference>
<dbReference type="PROSITE" id="PS50076">
    <property type="entry name" value="DNAJ_2"/>
    <property type="match status" value="1"/>
</dbReference>